<dbReference type="EMBL" id="DS231667">
    <property type="protein sequence ID" value="ESU14435.1"/>
    <property type="status" value="ALT_SEQ"/>
    <property type="molecule type" value="Genomic_DNA"/>
</dbReference>
<dbReference type="EMBL" id="HG970333">
    <property type="protein sequence ID" value="CEF77299.1"/>
    <property type="molecule type" value="Genomic_DNA"/>
</dbReference>
<dbReference type="RefSeq" id="XP_011319860.1">
    <property type="nucleotide sequence ID" value="XM_011321558.1"/>
</dbReference>
<dbReference type="SMR" id="Q4I1Q6"/>
<dbReference type="STRING" id="229533.Q4I1Q6"/>
<dbReference type="GeneID" id="23555834"/>
<dbReference type="KEGG" id="fgr:FGSG_08852"/>
<dbReference type="VEuPathDB" id="FungiDB:FGRAMPH1_01G10993"/>
<dbReference type="eggNOG" id="KOG0133">
    <property type="taxonomic scope" value="Eukaryota"/>
</dbReference>
<dbReference type="HOGENOM" id="CLU_010348_6_1_1"/>
<dbReference type="InParanoid" id="Q4I1Q6"/>
<dbReference type="OrthoDB" id="113914at110618"/>
<dbReference type="Proteomes" id="UP000070720">
    <property type="component" value="Chromosome 2"/>
</dbReference>
<dbReference type="GO" id="GO:0003684">
    <property type="term" value="F:damaged DNA binding"/>
    <property type="evidence" value="ECO:0007669"/>
    <property type="project" value="TreeGrafter"/>
</dbReference>
<dbReference type="GO" id="GO:0003904">
    <property type="term" value="F:deoxyribodipyrimidine photo-lyase activity"/>
    <property type="evidence" value="ECO:0007669"/>
    <property type="project" value="TreeGrafter"/>
</dbReference>
<dbReference type="GO" id="GO:0071949">
    <property type="term" value="F:FAD binding"/>
    <property type="evidence" value="ECO:0007669"/>
    <property type="project" value="TreeGrafter"/>
</dbReference>
<dbReference type="GO" id="GO:0000719">
    <property type="term" value="P:photoreactive repair"/>
    <property type="evidence" value="ECO:0007669"/>
    <property type="project" value="TreeGrafter"/>
</dbReference>
<dbReference type="Gene3D" id="1.25.40.80">
    <property type="match status" value="1"/>
</dbReference>
<dbReference type="Gene3D" id="1.10.579.10">
    <property type="entry name" value="DNA Cyclobutane Dipyrimidine Photolyase, subunit A, domain 3"/>
    <property type="match status" value="1"/>
</dbReference>
<dbReference type="Gene3D" id="3.40.50.620">
    <property type="entry name" value="HUPs"/>
    <property type="match status" value="1"/>
</dbReference>
<dbReference type="InterPro" id="IPR014133">
    <property type="entry name" value="Cry_DASH"/>
</dbReference>
<dbReference type="InterPro" id="IPR036134">
    <property type="entry name" value="Crypto/Photolyase_FAD-like_sf"/>
</dbReference>
<dbReference type="InterPro" id="IPR036155">
    <property type="entry name" value="Crypto/Photolyase_N_sf"/>
</dbReference>
<dbReference type="InterPro" id="IPR005101">
    <property type="entry name" value="Cryptochr/Photolyase_FAD-bd"/>
</dbReference>
<dbReference type="InterPro" id="IPR002081">
    <property type="entry name" value="Cryptochrome/DNA_photolyase_1"/>
</dbReference>
<dbReference type="InterPro" id="IPR006050">
    <property type="entry name" value="DNA_photolyase_N"/>
</dbReference>
<dbReference type="InterPro" id="IPR014729">
    <property type="entry name" value="Rossmann-like_a/b/a_fold"/>
</dbReference>
<dbReference type="NCBIfam" id="TIGR02765">
    <property type="entry name" value="crypto_DASH"/>
    <property type="match status" value="1"/>
</dbReference>
<dbReference type="PANTHER" id="PTHR11455">
    <property type="entry name" value="CRYPTOCHROME"/>
    <property type="match status" value="1"/>
</dbReference>
<dbReference type="PANTHER" id="PTHR11455:SF22">
    <property type="entry name" value="CRYPTOCHROME DASH"/>
    <property type="match status" value="1"/>
</dbReference>
<dbReference type="Pfam" id="PF00875">
    <property type="entry name" value="DNA_photolyase"/>
    <property type="match status" value="1"/>
</dbReference>
<dbReference type="Pfam" id="PF03441">
    <property type="entry name" value="FAD_binding_7"/>
    <property type="match status" value="1"/>
</dbReference>
<dbReference type="PRINTS" id="PR00147">
    <property type="entry name" value="DNAPHOTLYASE"/>
</dbReference>
<dbReference type="SUPFAM" id="SSF48173">
    <property type="entry name" value="Cryptochrome/photolyase FAD-binding domain"/>
    <property type="match status" value="1"/>
</dbReference>
<dbReference type="SUPFAM" id="SSF52425">
    <property type="entry name" value="Cryptochrome/photolyase, N-terminal domain"/>
    <property type="match status" value="1"/>
</dbReference>
<dbReference type="PROSITE" id="PS51645">
    <property type="entry name" value="PHR_CRY_ALPHA_BETA"/>
    <property type="match status" value="1"/>
</dbReference>
<name>CRYD_GIBZE</name>
<sequence length="697" mass="79863">MAGNKLLVYLLRRDLRATDNPILHHLATSDHGFTHLLPIYILPPHQIETSGFVVEGQKSPYPLAKSQVGRFWRCGPLRAKFQAECIWDVKKNFENIGSGMLIRIGKFDDVLKHLIKSLNEDHQSIDTVWMTEEPSKEELDDQTAVASVCSKEGIGFKLWHDEKYFIDDRDNGLKDPQDTPDVFTTYRKTQEPLRERPRPPLPRPQAGSLPSFPSWIPPQQAPFRIPDDYDEFERLLLEPVKAPIISDPPQFPEGAKSAHPFKGGETPAWDRLYHLIKSGAMTTYQETRNGLLGTEYSTKLSAFLAMGTITARSIHAELVKFEDGSEESYSRGFGFGKGENEGTRAVRFELLWRDYMRLCTFKFRTRLFKIDGFKGASGNYTKKWLTDREEDAEPDQNPTPAQVKDMIDRWIRGTTGMGLVDASQRELQLTGYTSNRARQNVASYLTKSLGIDWRLGAEYYEQSLIDYDTHSNWGNWQYQASCGNDPRSRSFNQVKQAFDYDQDGRFTRTWVNEVKSIDRLEHVFQICTCPKQELEKHGLSDNIMVTNPLKRIDFSVTKPRGNRRPYRWRKQGDRGRGGRGGRGGGTGNTSGNGDNRHNEPSPPNGGNRHNDFSPANGGSYMQGQPISGGYQQMAWRGNSHGLPSGRGYNSRQYMLDYSQQQQQPQHQLQHYYAHQQHQHPHPRQQQQQFYHQIPPHI</sequence>
<gene>
    <name type="ORF">FGRRES_16955</name>
    <name type="ORF">FGSG_08852</name>
</gene>
<feature type="chain" id="PRO_0000235323" description="Putative cryptochrome DASH">
    <location>
        <begin position="1"/>
        <end position="697"/>
    </location>
</feature>
<feature type="domain" description="Photolyase/cryptochrome alpha/beta">
    <location>
        <begin position="5"/>
        <end position="164"/>
    </location>
</feature>
<feature type="region of interest" description="Disordered" evidence="2">
    <location>
        <begin position="170"/>
        <end position="215"/>
    </location>
</feature>
<feature type="region of interest" description="Disordered" evidence="2">
    <location>
        <begin position="554"/>
        <end position="697"/>
    </location>
</feature>
<feature type="compositionally biased region" description="Basic and acidic residues" evidence="2">
    <location>
        <begin position="188"/>
        <end position="198"/>
    </location>
</feature>
<feature type="compositionally biased region" description="Basic residues" evidence="2">
    <location>
        <begin position="560"/>
        <end position="569"/>
    </location>
</feature>
<feature type="compositionally biased region" description="Gly residues" evidence="2">
    <location>
        <begin position="578"/>
        <end position="590"/>
    </location>
</feature>
<feature type="compositionally biased region" description="Low complexity" evidence="2">
    <location>
        <begin position="659"/>
        <end position="675"/>
    </location>
</feature>
<feature type="compositionally biased region" description="Low complexity" evidence="2">
    <location>
        <begin position="683"/>
        <end position="697"/>
    </location>
</feature>
<proteinExistence type="inferred from homology"/>
<comment type="function">
    <text evidence="1">May have a photoreceptor function.</text>
</comment>
<comment type="cofactor">
    <cofactor evidence="1">
        <name>FAD</name>
        <dbReference type="ChEBI" id="CHEBI:57692"/>
    </cofactor>
    <text evidence="1">Binds 1 FAD per subunit.</text>
</comment>
<comment type="cofactor">
    <cofactor evidence="1">
        <name>(6R)-5,10-methylene-5,6,7,8-tetrahydrofolate</name>
        <dbReference type="ChEBI" id="CHEBI:15636"/>
    </cofactor>
    <text evidence="1">Binds 1 5,10-methenyltetrahydrofolate (MTHF) per subunit.</text>
</comment>
<comment type="similarity">
    <text evidence="3">Belongs to the DNA photolyase class-1 family.</text>
</comment>
<comment type="sequence caution" evidence="3">
    <conflict type="erroneous gene model prediction">
        <sequence resource="EMBL-CDS" id="ESU14435"/>
    </conflict>
</comment>
<keyword id="KW-0157">Chromophore</keyword>
<keyword id="KW-0274">FAD</keyword>
<keyword id="KW-0285">Flavoprotein</keyword>
<keyword id="KW-1185">Reference proteome</keyword>
<protein>
    <recommendedName>
        <fullName>Putative cryptochrome DASH</fullName>
    </recommendedName>
</protein>
<organism>
    <name type="scientific">Gibberella zeae (strain ATCC MYA-4620 / CBS 123657 / FGSC 9075 / NRRL 31084 / PH-1)</name>
    <name type="common">Wheat head blight fungus</name>
    <name type="synonym">Fusarium graminearum</name>
    <dbReference type="NCBI Taxonomy" id="229533"/>
    <lineage>
        <taxon>Eukaryota</taxon>
        <taxon>Fungi</taxon>
        <taxon>Dikarya</taxon>
        <taxon>Ascomycota</taxon>
        <taxon>Pezizomycotina</taxon>
        <taxon>Sordariomycetes</taxon>
        <taxon>Hypocreomycetidae</taxon>
        <taxon>Hypocreales</taxon>
        <taxon>Nectriaceae</taxon>
        <taxon>Fusarium</taxon>
    </lineage>
</organism>
<evidence type="ECO:0000250" key="1"/>
<evidence type="ECO:0000256" key="2">
    <source>
        <dbReference type="SAM" id="MobiDB-lite"/>
    </source>
</evidence>
<evidence type="ECO:0000305" key="3"/>
<reference key="1">
    <citation type="journal article" date="2007" name="Science">
        <title>The Fusarium graminearum genome reveals a link between localized polymorphism and pathogen specialization.</title>
        <authorList>
            <person name="Cuomo C.A."/>
            <person name="Gueldener U."/>
            <person name="Xu J.-R."/>
            <person name="Trail F."/>
            <person name="Turgeon B.G."/>
            <person name="Di Pietro A."/>
            <person name="Walton J.D."/>
            <person name="Ma L.-J."/>
            <person name="Baker S.E."/>
            <person name="Rep M."/>
            <person name="Adam G."/>
            <person name="Antoniw J."/>
            <person name="Baldwin T."/>
            <person name="Calvo S.E."/>
            <person name="Chang Y.-L."/>
            <person name="DeCaprio D."/>
            <person name="Gale L.R."/>
            <person name="Gnerre S."/>
            <person name="Goswami R.S."/>
            <person name="Hammond-Kosack K."/>
            <person name="Harris L.J."/>
            <person name="Hilburn K."/>
            <person name="Kennell J.C."/>
            <person name="Kroken S."/>
            <person name="Magnuson J.K."/>
            <person name="Mannhaupt G."/>
            <person name="Mauceli E.W."/>
            <person name="Mewes H.-W."/>
            <person name="Mitterbauer R."/>
            <person name="Muehlbauer G."/>
            <person name="Muensterkoetter M."/>
            <person name="Nelson D."/>
            <person name="O'Donnell K."/>
            <person name="Ouellet T."/>
            <person name="Qi W."/>
            <person name="Quesneville H."/>
            <person name="Roncero M.I.G."/>
            <person name="Seong K.-Y."/>
            <person name="Tetko I.V."/>
            <person name="Urban M."/>
            <person name="Waalwijk C."/>
            <person name="Ward T.J."/>
            <person name="Yao J."/>
            <person name="Birren B.W."/>
            <person name="Kistler H.C."/>
        </authorList>
    </citation>
    <scope>NUCLEOTIDE SEQUENCE [LARGE SCALE GENOMIC DNA]</scope>
    <source>
        <strain>ATCC MYA-4620 / CBS 123657 / FGSC 9075 / NRRL 31084 / PH-1</strain>
    </source>
</reference>
<reference key="2">
    <citation type="journal article" date="2010" name="Nature">
        <title>Comparative genomics reveals mobile pathogenicity chromosomes in Fusarium.</title>
        <authorList>
            <person name="Ma L.-J."/>
            <person name="van der Does H.C."/>
            <person name="Borkovich K.A."/>
            <person name="Coleman J.J."/>
            <person name="Daboussi M.-J."/>
            <person name="Di Pietro A."/>
            <person name="Dufresne M."/>
            <person name="Freitag M."/>
            <person name="Grabherr M."/>
            <person name="Henrissat B."/>
            <person name="Houterman P.M."/>
            <person name="Kang S."/>
            <person name="Shim W.-B."/>
            <person name="Woloshuk C."/>
            <person name="Xie X."/>
            <person name="Xu J.-R."/>
            <person name="Antoniw J."/>
            <person name="Baker S.E."/>
            <person name="Bluhm B.H."/>
            <person name="Breakspear A."/>
            <person name="Brown D.W."/>
            <person name="Butchko R.A.E."/>
            <person name="Chapman S."/>
            <person name="Coulson R."/>
            <person name="Coutinho P.M."/>
            <person name="Danchin E.G.J."/>
            <person name="Diener A."/>
            <person name="Gale L.R."/>
            <person name="Gardiner D.M."/>
            <person name="Goff S."/>
            <person name="Hammond-Kosack K.E."/>
            <person name="Hilburn K."/>
            <person name="Hua-Van A."/>
            <person name="Jonkers W."/>
            <person name="Kazan K."/>
            <person name="Kodira C.D."/>
            <person name="Koehrsen M."/>
            <person name="Kumar L."/>
            <person name="Lee Y.-H."/>
            <person name="Li L."/>
            <person name="Manners J.M."/>
            <person name="Miranda-Saavedra D."/>
            <person name="Mukherjee M."/>
            <person name="Park G."/>
            <person name="Park J."/>
            <person name="Park S.-Y."/>
            <person name="Proctor R.H."/>
            <person name="Regev A."/>
            <person name="Ruiz-Roldan M.C."/>
            <person name="Sain D."/>
            <person name="Sakthikumar S."/>
            <person name="Sykes S."/>
            <person name="Schwartz D.C."/>
            <person name="Turgeon B.G."/>
            <person name="Wapinski I."/>
            <person name="Yoder O."/>
            <person name="Young S."/>
            <person name="Zeng Q."/>
            <person name="Zhou S."/>
            <person name="Galagan J."/>
            <person name="Cuomo C.A."/>
            <person name="Kistler H.C."/>
            <person name="Rep M."/>
        </authorList>
    </citation>
    <scope>GENOME REANNOTATION</scope>
    <source>
        <strain>ATCC MYA-4620 / CBS 123657 / FGSC 9075 / NRRL 31084 / PH-1</strain>
    </source>
</reference>
<reference key="3">
    <citation type="journal article" date="2015" name="BMC Genomics">
        <title>The completed genome sequence of the pathogenic ascomycete fungus Fusarium graminearum.</title>
        <authorList>
            <person name="King R."/>
            <person name="Urban M."/>
            <person name="Hammond-Kosack M.C.U."/>
            <person name="Hassani-Pak K."/>
            <person name="Hammond-Kosack K.E."/>
        </authorList>
    </citation>
    <scope>NUCLEOTIDE SEQUENCE [LARGE SCALE GENOMIC DNA]</scope>
    <source>
        <strain>ATCC MYA-4620 / CBS 123657 / FGSC 9075 / NRRL 31084 / PH-1</strain>
    </source>
</reference>
<accession>Q4I1Q6</accession>
<accession>A0A098DEC3</accession>
<accession>A0A0E0S1C4</accession>
<accession>V6RR81</accession>